<protein>
    <recommendedName>
        <fullName evidence="1">Sterol 3-beta-glucosyltransferase ATG26</fullName>
        <ecNumber evidence="1">2.4.1.-</ecNumber>
        <ecNumber evidence="1">2.4.1.173</ecNumber>
    </recommendedName>
    <alternativeName>
        <fullName evidence="7">Autophagy-related protein 26</fullName>
    </alternativeName>
</protein>
<sequence>MATQADDAAASQANIEDGDLKEHVHDELDKIQQQRSTATVFPEPLRESDSEDSDDEDNGPAQAPPMFMNMNQSIYGLIAQASNRVDFNDRFDGMSSDEEGESSQNTRTESIARTSILQPAGKGKDKVHRRRKLSEHKLLRSLPALPKLRSRHKSQHSTLPAPEEVADEADDEHGDGGLLPAPALTLTRQDTQDRLAPVMSRMLEAKADLSIRPSFDLDRLSSDVSRSSDSDEVSALSRKLKEIFEFDEYEQVIEEYPCWLLQSVLLQGYMYITSKHICFYAYLPKKTHEAVKSGYLSKSGKRNPSYARFWFRLKGDVLTYYKTATDVYFPHGQIDLRYGISASIVDTDKEALHFVVETRHRTYKFKADSAPSAKEWVKSLQRVIFRSHNDGDSVKISLPIKNVMDIEDTQMISFADTCKIRVIDNDETYAIDEYFFSFFSFGKEAINVLKILIEDSSGARSAEQVITGDDHDSSQPSSGHASKAASKRAPSKLSTGKLPDTVKATLAPMSPLSPRSPSQLSPRASMDAPRSSFDGFRRFGKKSLDVTSSIGDHSPRRSFSGRRSTSHQHRQGTTTPKQAHDSEDSFLQSSIENPSISTLSPSSYDEPSASQILQGSDVFHSPMMRRSASTSRKRDRSGKRTPRSSSAHGDRHHGIPHAATTGAIHKMGDEQADSQRPATPTLNSITKIGAYPLQRANAFAEYLSRTSQRMGSMFATESLGYVEKVHGMWKGEHRHYDEPQELRTDDDGEDIDSEADDKMQTTIDRFRAHFALPESEKLVATYFGAIFKVLPLYGKFYISDRSFCFRSLYPGTRTKLILPLKDIENVHKEKGFRYGYYGLTVVIRGHEELFFEFRKPGLRDDCAVTLHQLMETNRFLEQSGILDQEEQDDEEAAAAMAERDELQEARQDEFVDHELTLPRTTSGVSNAPTILFDNPNSSGLAFKPQKSMKITCLTIGSRGDIQPYIALCKGLLAEGHKPRIATHGEFQEWVESHGIEFARVEGDPGELMRLCIENGTFTWAFLREANSTFRGWLDDLLDSAYTACEGSELLIESPSAMAGIHIAEKLEIPYFRAFTMPWTRTRAYPHAFIMPEHKMGGAFNYMTYVMFDNIFWKATAYQVNRWRNKTLGLPSTSLEKMQPNKVPFLYNFSPSVVAPPLDFSDWIRVTGYWFLNEGGGDWKPPQELQDFIAKARADGKKIVYVGFGSIIVKDPAKMTQEVIDAVLKADVRCILSKGWSDRISPKDDPSKPPPDEPVIPAEIHVITSAPHDWLFSQIDAAAHHGGSGTTGASLRAGIPTIIRPFFGDQFFFSTRVEDLGVGVCVRKWGTNSFGRALWEVTRNERMIVKARVLGEQIRSESGVDNAIQCIYRDLEYAKSLIKRRAGKNNAEHGLAEDDDDTEESWTFVGRDEPDPDAVTKKLSDGLAGLGAAGDRPPPLGSQAPTVA</sequence>
<comment type="function">
    <text evidence="1">Sterol glycosyltransferase responsible for the glycosylation of ergosterol to form ergosterol-glucoside.</text>
</comment>
<comment type="catalytic activity">
    <reaction evidence="1">
        <text>a sterol + UDP-alpha-D-glucose = a sterol 3-beta-D-glucoside + UDP + H(+)</text>
        <dbReference type="Rhea" id="RHEA:22724"/>
        <dbReference type="ChEBI" id="CHEBI:15378"/>
        <dbReference type="ChEBI" id="CHEBI:15889"/>
        <dbReference type="ChEBI" id="CHEBI:37424"/>
        <dbReference type="ChEBI" id="CHEBI:58223"/>
        <dbReference type="ChEBI" id="CHEBI:58885"/>
        <dbReference type="EC" id="2.4.1.173"/>
    </reaction>
    <physiologicalReaction direction="left-to-right" evidence="1">
        <dbReference type="Rhea" id="RHEA:22725"/>
    </physiologicalReaction>
</comment>
<comment type="catalytic activity">
    <reaction evidence="1">
        <text>ergosterol + UDP-alpha-D-glucose = ergosteryl 3-beta-D-glucoside + UDP + H(+)</text>
        <dbReference type="Rhea" id="RHEA:61836"/>
        <dbReference type="ChEBI" id="CHEBI:15378"/>
        <dbReference type="ChEBI" id="CHEBI:16933"/>
        <dbReference type="ChEBI" id="CHEBI:52973"/>
        <dbReference type="ChEBI" id="CHEBI:58223"/>
        <dbReference type="ChEBI" id="CHEBI:58885"/>
    </reaction>
    <physiologicalReaction direction="left-to-right" evidence="1">
        <dbReference type="Rhea" id="RHEA:61837"/>
    </physiologicalReaction>
</comment>
<comment type="subcellular location">
    <subcellularLocation>
        <location evidence="1">Cytoplasm</location>
    </subcellularLocation>
    <subcellularLocation>
        <location evidence="2">Preautophagosomal structure membrane</location>
        <topology evidence="2">Peripheral membrane protein</topology>
    </subcellularLocation>
</comment>
<comment type="domain">
    <text evidence="2">The GRAM and PH domains are required for the localization of ATG26 to the preautophagosomal structure (PAS) and are involved in autophagy (By similarity).</text>
</comment>
<comment type="disruption phenotype">
    <text evidence="6">Does not significantly decrease the growth rate under nutrient-rich conditions (PubMed:28894236).</text>
</comment>
<comment type="similarity">
    <text evidence="8">Belongs to the glycosyltransferase 28 family.</text>
</comment>
<gene>
    <name evidence="7" type="primary">ATG26</name>
    <name type="ORF">FG07850</name>
    <name type="ORF">FGRAMPH1_01T25811</name>
</gene>
<dbReference type="EC" id="2.4.1.-" evidence="1"/>
<dbReference type="EC" id="2.4.1.173" evidence="1"/>
<dbReference type="EMBL" id="HG970335">
    <property type="protein sequence ID" value="CEF83977.1"/>
    <property type="molecule type" value="Genomic_DNA"/>
</dbReference>
<dbReference type="RefSeq" id="XP_011327675.1">
    <property type="nucleotide sequence ID" value="XM_011329373.1"/>
</dbReference>
<dbReference type="SMR" id="I1S8Q3"/>
<dbReference type="FunCoup" id="I1S8Q3">
    <property type="interactions" value="95"/>
</dbReference>
<dbReference type="STRING" id="229533.I1S8Q3"/>
<dbReference type="KEGG" id="fgr:FGSG_13231"/>
<dbReference type="VEuPathDB" id="FungiDB:FGRAMPH1_01G25811"/>
<dbReference type="eggNOG" id="KOG1192">
    <property type="taxonomic scope" value="Eukaryota"/>
</dbReference>
<dbReference type="HOGENOM" id="CLU_000537_6_0_1"/>
<dbReference type="InParanoid" id="I1S8Q3"/>
<dbReference type="OrthoDB" id="71167at110618"/>
<dbReference type="Proteomes" id="UP000070720">
    <property type="component" value="Chromosome 4"/>
</dbReference>
<dbReference type="GO" id="GO:0034045">
    <property type="term" value="C:phagophore assembly site membrane"/>
    <property type="evidence" value="ECO:0007669"/>
    <property type="project" value="UniProtKB-SubCell"/>
</dbReference>
<dbReference type="GO" id="GO:0016906">
    <property type="term" value="F:sterol 3-beta-glucosyltransferase activity"/>
    <property type="evidence" value="ECO:0007669"/>
    <property type="project" value="UniProtKB-EC"/>
</dbReference>
<dbReference type="GO" id="GO:0006914">
    <property type="term" value="P:autophagy"/>
    <property type="evidence" value="ECO:0007669"/>
    <property type="project" value="UniProtKB-KW"/>
</dbReference>
<dbReference type="GO" id="GO:0005975">
    <property type="term" value="P:carbohydrate metabolic process"/>
    <property type="evidence" value="ECO:0007669"/>
    <property type="project" value="InterPro"/>
</dbReference>
<dbReference type="GO" id="GO:0030259">
    <property type="term" value="P:lipid glycosylation"/>
    <property type="evidence" value="ECO:0007669"/>
    <property type="project" value="InterPro"/>
</dbReference>
<dbReference type="GO" id="GO:0015031">
    <property type="term" value="P:protein transport"/>
    <property type="evidence" value="ECO:0007669"/>
    <property type="project" value="UniProtKB-KW"/>
</dbReference>
<dbReference type="GO" id="GO:0016125">
    <property type="term" value="P:sterol metabolic process"/>
    <property type="evidence" value="ECO:0007669"/>
    <property type="project" value="TreeGrafter"/>
</dbReference>
<dbReference type="CDD" id="cd03784">
    <property type="entry name" value="GT1_Gtf-like"/>
    <property type="match status" value="1"/>
</dbReference>
<dbReference type="CDD" id="cd13215">
    <property type="entry name" value="PH-GRAM1_AGT26"/>
    <property type="match status" value="1"/>
</dbReference>
<dbReference type="CDD" id="cd13216">
    <property type="entry name" value="PH-GRAM2_AGT26"/>
    <property type="match status" value="1"/>
</dbReference>
<dbReference type="FunFam" id="2.30.29.30:FF:000303">
    <property type="entry name" value="Sterol 3-beta-glucosyltransferase"/>
    <property type="match status" value="1"/>
</dbReference>
<dbReference type="FunFam" id="3.40.50.2000:FF:000029">
    <property type="entry name" value="Sterol 3-beta-glucosyltransferase"/>
    <property type="match status" value="1"/>
</dbReference>
<dbReference type="FunFam" id="3.40.50.2000:FF:000009">
    <property type="entry name" value="Sterol 3-beta-glucosyltransferase UGT80A2"/>
    <property type="match status" value="1"/>
</dbReference>
<dbReference type="Gene3D" id="3.40.50.2000">
    <property type="entry name" value="Glycogen Phosphorylase B"/>
    <property type="match status" value="2"/>
</dbReference>
<dbReference type="Gene3D" id="2.30.29.30">
    <property type="entry name" value="Pleckstrin-homology domain (PH domain)/Phosphotyrosine-binding domain (PTB)"/>
    <property type="match status" value="3"/>
</dbReference>
<dbReference type="InterPro" id="IPR048066">
    <property type="entry name" value="ATG26_PH_GRAM1"/>
</dbReference>
<dbReference type="InterPro" id="IPR048065">
    <property type="entry name" value="ATG26_PH_GRAM2"/>
</dbReference>
<dbReference type="InterPro" id="IPR010610">
    <property type="entry name" value="EryCIII-like_C"/>
</dbReference>
<dbReference type="InterPro" id="IPR050426">
    <property type="entry name" value="Glycosyltransferase_28"/>
</dbReference>
<dbReference type="InterPro" id="IPR004276">
    <property type="entry name" value="GlycoTrans_28_N"/>
</dbReference>
<dbReference type="InterPro" id="IPR004182">
    <property type="entry name" value="GRAM"/>
</dbReference>
<dbReference type="InterPro" id="IPR011993">
    <property type="entry name" value="PH-like_dom_sf"/>
</dbReference>
<dbReference type="InterPro" id="IPR001849">
    <property type="entry name" value="PH_domain"/>
</dbReference>
<dbReference type="InterPro" id="IPR002213">
    <property type="entry name" value="UDP_glucos_trans"/>
</dbReference>
<dbReference type="PANTHER" id="PTHR48050">
    <property type="entry name" value="STEROL 3-BETA-GLUCOSYLTRANSFERASE"/>
    <property type="match status" value="1"/>
</dbReference>
<dbReference type="PANTHER" id="PTHR48050:SF25">
    <property type="entry name" value="STEROL 3-BETA-GLUCOSYLTRANSFERASE"/>
    <property type="match status" value="1"/>
</dbReference>
<dbReference type="Pfam" id="PF06722">
    <property type="entry name" value="EryCIII-like_C"/>
    <property type="match status" value="1"/>
</dbReference>
<dbReference type="Pfam" id="PF03033">
    <property type="entry name" value="Glyco_transf_28"/>
    <property type="match status" value="1"/>
</dbReference>
<dbReference type="Pfam" id="PF02893">
    <property type="entry name" value="GRAM"/>
    <property type="match status" value="2"/>
</dbReference>
<dbReference type="Pfam" id="PF00169">
    <property type="entry name" value="PH"/>
    <property type="match status" value="1"/>
</dbReference>
<dbReference type="SMART" id="SM00568">
    <property type="entry name" value="GRAM"/>
    <property type="match status" value="2"/>
</dbReference>
<dbReference type="SMART" id="SM00233">
    <property type="entry name" value="PH"/>
    <property type="match status" value="1"/>
</dbReference>
<dbReference type="SUPFAM" id="SSF50729">
    <property type="entry name" value="PH domain-like"/>
    <property type="match status" value="1"/>
</dbReference>
<dbReference type="SUPFAM" id="SSF53756">
    <property type="entry name" value="UDP-Glycosyltransferase/glycogen phosphorylase"/>
    <property type="match status" value="1"/>
</dbReference>
<dbReference type="PROSITE" id="PS50003">
    <property type="entry name" value="PH_DOMAIN"/>
    <property type="match status" value="1"/>
</dbReference>
<feature type="chain" id="PRO_0000443924" description="Sterol 3-beta-glucosyltransferase ATG26">
    <location>
        <begin position="1"/>
        <end position="1443"/>
    </location>
</feature>
<feature type="domain" description="GRAM 1" evidence="3">
    <location>
        <begin position="240"/>
        <end position="284"/>
    </location>
</feature>
<feature type="domain" description="PH" evidence="4">
    <location>
        <begin position="289"/>
        <end position="385"/>
    </location>
</feature>
<feature type="domain" description="GRAM 2" evidence="3">
    <location>
        <begin position="765"/>
        <end position="870"/>
    </location>
</feature>
<feature type="region of interest" description="Disordered" evidence="5">
    <location>
        <begin position="1"/>
        <end position="69"/>
    </location>
</feature>
<feature type="region of interest" description="Disordered" evidence="5">
    <location>
        <begin position="88"/>
        <end position="187"/>
    </location>
</feature>
<feature type="region of interest" description="Disordered" evidence="5">
    <location>
        <begin position="463"/>
        <end position="657"/>
    </location>
</feature>
<feature type="region of interest" description="Disordered" evidence="5">
    <location>
        <begin position="1385"/>
        <end position="1443"/>
    </location>
</feature>
<feature type="coiled-coil region" evidence="3">
    <location>
        <begin position="883"/>
        <end position="910"/>
    </location>
</feature>
<feature type="compositionally biased region" description="Low complexity" evidence="5">
    <location>
        <begin position="1"/>
        <end position="13"/>
    </location>
</feature>
<feature type="compositionally biased region" description="Basic and acidic residues" evidence="5">
    <location>
        <begin position="18"/>
        <end position="32"/>
    </location>
</feature>
<feature type="compositionally biased region" description="Acidic residues" evidence="5">
    <location>
        <begin position="49"/>
        <end position="58"/>
    </location>
</feature>
<feature type="compositionally biased region" description="Polar residues" evidence="5">
    <location>
        <begin position="104"/>
        <end position="117"/>
    </location>
</feature>
<feature type="compositionally biased region" description="Basic residues" evidence="5">
    <location>
        <begin position="125"/>
        <end position="134"/>
    </location>
</feature>
<feature type="compositionally biased region" description="Acidic residues" evidence="5">
    <location>
        <begin position="164"/>
        <end position="173"/>
    </location>
</feature>
<feature type="compositionally biased region" description="Low complexity" evidence="5">
    <location>
        <begin position="506"/>
        <end position="525"/>
    </location>
</feature>
<feature type="compositionally biased region" description="Polar residues" evidence="5">
    <location>
        <begin position="585"/>
        <end position="614"/>
    </location>
</feature>
<feature type="compositionally biased region" description="Basic residues" evidence="5">
    <location>
        <begin position="631"/>
        <end position="642"/>
    </location>
</feature>
<feature type="compositionally biased region" description="Basic and acidic residues" evidence="5">
    <location>
        <begin position="1405"/>
        <end position="1419"/>
    </location>
</feature>
<feature type="binding site" evidence="1">
    <location>
        <position position="957"/>
    </location>
    <ligand>
        <name>UDP-alpha-D-glucose</name>
        <dbReference type="ChEBI" id="CHEBI:58885"/>
    </ligand>
</feature>
<feature type="binding site" evidence="1">
    <location>
        <position position="958"/>
    </location>
    <ligand>
        <name>UDP-alpha-D-glucose</name>
        <dbReference type="ChEBI" id="CHEBI:58885"/>
    </ligand>
</feature>
<feature type="binding site" evidence="1">
    <location>
        <position position="960"/>
    </location>
    <ligand>
        <name>UDP-alpha-D-glucose</name>
        <dbReference type="ChEBI" id="CHEBI:58885"/>
    </ligand>
</feature>
<feature type="binding site" evidence="1">
    <location>
        <position position="1265"/>
    </location>
    <ligand>
        <name>UDP-alpha-D-glucose</name>
        <dbReference type="ChEBI" id="CHEBI:58885"/>
    </ligand>
</feature>
<feature type="binding site" evidence="1">
    <location>
        <position position="1267"/>
    </location>
    <ligand>
        <name>UDP-alpha-D-glucose</name>
        <dbReference type="ChEBI" id="CHEBI:58885"/>
    </ligand>
</feature>
<feature type="binding site" evidence="1">
    <location>
        <position position="1280"/>
    </location>
    <ligand>
        <name>UDP-alpha-D-glucose</name>
        <dbReference type="ChEBI" id="CHEBI:58885"/>
    </ligand>
</feature>
<feature type="binding site" evidence="1">
    <location>
        <position position="1283"/>
    </location>
    <ligand>
        <name>UDP-alpha-D-glucose</name>
        <dbReference type="ChEBI" id="CHEBI:58885"/>
    </ligand>
</feature>
<feature type="binding site" evidence="1">
    <location>
        <position position="1284"/>
    </location>
    <ligand>
        <name>UDP-alpha-D-glucose</name>
        <dbReference type="ChEBI" id="CHEBI:58885"/>
    </ligand>
</feature>
<feature type="binding site" evidence="1">
    <location>
        <position position="1285"/>
    </location>
    <ligand>
        <name>UDP-alpha-D-glucose</name>
        <dbReference type="ChEBI" id="CHEBI:58885"/>
    </ligand>
</feature>
<feature type="binding site" evidence="1">
    <location>
        <position position="1304"/>
    </location>
    <ligand>
        <name>UDP-alpha-D-glucose</name>
        <dbReference type="ChEBI" id="CHEBI:58885"/>
    </ligand>
</feature>
<feature type="binding site" evidence="1">
    <location>
        <position position="1305"/>
    </location>
    <ligand>
        <name>UDP-alpha-D-glucose</name>
        <dbReference type="ChEBI" id="CHEBI:58885"/>
    </ligand>
</feature>
<keyword id="KW-0072">Autophagy</keyword>
<keyword id="KW-0175">Coiled coil</keyword>
<keyword id="KW-0963">Cytoplasm</keyword>
<keyword id="KW-0328">Glycosyltransferase</keyword>
<keyword id="KW-0472">Membrane</keyword>
<keyword id="KW-0653">Protein transport</keyword>
<keyword id="KW-1185">Reference proteome</keyword>
<keyword id="KW-0677">Repeat</keyword>
<keyword id="KW-0808">Transferase</keyword>
<keyword id="KW-0813">Transport</keyword>
<evidence type="ECO:0000250" key="1">
    <source>
        <dbReference type="UniProtKB" id="Q06321"/>
    </source>
</evidence>
<evidence type="ECO:0000250" key="2">
    <source>
        <dbReference type="UniProtKB" id="Q2U0C3"/>
    </source>
</evidence>
<evidence type="ECO:0000255" key="3"/>
<evidence type="ECO:0000255" key="4">
    <source>
        <dbReference type="PROSITE-ProRule" id="PRU00145"/>
    </source>
</evidence>
<evidence type="ECO:0000256" key="5">
    <source>
        <dbReference type="SAM" id="MobiDB-lite"/>
    </source>
</evidence>
<evidence type="ECO:0000269" key="6">
    <source>
    </source>
</evidence>
<evidence type="ECO:0000303" key="7">
    <source>
    </source>
</evidence>
<evidence type="ECO:0000305" key="8"/>
<organism>
    <name type="scientific">Gibberella zeae (strain ATCC MYA-4620 / CBS 123657 / FGSC 9075 / NRRL 31084 / PH-1)</name>
    <name type="common">Wheat head blight fungus</name>
    <name type="synonym">Fusarium graminearum</name>
    <dbReference type="NCBI Taxonomy" id="229533"/>
    <lineage>
        <taxon>Eukaryota</taxon>
        <taxon>Fungi</taxon>
        <taxon>Dikarya</taxon>
        <taxon>Ascomycota</taxon>
        <taxon>Pezizomycotina</taxon>
        <taxon>Sordariomycetes</taxon>
        <taxon>Hypocreomycetidae</taxon>
        <taxon>Hypocreales</taxon>
        <taxon>Nectriaceae</taxon>
        <taxon>Fusarium</taxon>
    </lineage>
</organism>
<reference key="1">
    <citation type="journal article" date="2007" name="Science">
        <title>The Fusarium graminearum genome reveals a link between localized polymorphism and pathogen specialization.</title>
        <authorList>
            <person name="Cuomo C.A."/>
            <person name="Gueldener U."/>
            <person name="Xu J.-R."/>
            <person name="Trail F."/>
            <person name="Turgeon B.G."/>
            <person name="Di Pietro A."/>
            <person name="Walton J.D."/>
            <person name="Ma L.-J."/>
            <person name="Baker S.E."/>
            <person name="Rep M."/>
            <person name="Adam G."/>
            <person name="Antoniw J."/>
            <person name="Baldwin T."/>
            <person name="Calvo S.E."/>
            <person name="Chang Y.-L."/>
            <person name="DeCaprio D."/>
            <person name="Gale L.R."/>
            <person name="Gnerre S."/>
            <person name="Goswami R.S."/>
            <person name="Hammond-Kosack K."/>
            <person name="Harris L.J."/>
            <person name="Hilburn K."/>
            <person name="Kennell J.C."/>
            <person name="Kroken S."/>
            <person name="Magnuson J.K."/>
            <person name="Mannhaupt G."/>
            <person name="Mauceli E.W."/>
            <person name="Mewes H.-W."/>
            <person name="Mitterbauer R."/>
            <person name="Muehlbauer G."/>
            <person name="Muensterkoetter M."/>
            <person name="Nelson D."/>
            <person name="O'Donnell K."/>
            <person name="Ouellet T."/>
            <person name="Qi W."/>
            <person name="Quesneville H."/>
            <person name="Roncero M.I.G."/>
            <person name="Seong K.-Y."/>
            <person name="Tetko I.V."/>
            <person name="Urban M."/>
            <person name="Waalwijk C."/>
            <person name="Ward T.J."/>
            <person name="Yao J."/>
            <person name="Birren B.W."/>
            <person name="Kistler H.C."/>
        </authorList>
    </citation>
    <scope>NUCLEOTIDE SEQUENCE [LARGE SCALE GENOMIC DNA]</scope>
    <source>
        <strain>ATCC MYA-4620 / CBS 123657 / FGSC 9075 / NRRL 31084 / PH-1</strain>
    </source>
</reference>
<reference key="2">
    <citation type="journal article" date="2010" name="Nature">
        <title>Comparative genomics reveals mobile pathogenicity chromosomes in Fusarium.</title>
        <authorList>
            <person name="Ma L.-J."/>
            <person name="van der Does H.C."/>
            <person name="Borkovich K.A."/>
            <person name="Coleman J.J."/>
            <person name="Daboussi M.-J."/>
            <person name="Di Pietro A."/>
            <person name="Dufresne M."/>
            <person name="Freitag M."/>
            <person name="Grabherr M."/>
            <person name="Henrissat B."/>
            <person name="Houterman P.M."/>
            <person name="Kang S."/>
            <person name="Shim W.-B."/>
            <person name="Woloshuk C."/>
            <person name="Xie X."/>
            <person name="Xu J.-R."/>
            <person name="Antoniw J."/>
            <person name="Baker S.E."/>
            <person name="Bluhm B.H."/>
            <person name="Breakspear A."/>
            <person name="Brown D.W."/>
            <person name="Butchko R.A.E."/>
            <person name="Chapman S."/>
            <person name="Coulson R."/>
            <person name="Coutinho P.M."/>
            <person name="Danchin E.G.J."/>
            <person name="Diener A."/>
            <person name="Gale L.R."/>
            <person name="Gardiner D.M."/>
            <person name="Goff S."/>
            <person name="Hammond-Kosack K.E."/>
            <person name="Hilburn K."/>
            <person name="Hua-Van A."/>
            <person name="Jonkers W."/>
            <person name="Kazan K."/>
            <person name="Kodira C.D."/>
            <person name="Koehrsen M."/>
            <person name="Kumar L."/>
            <person name="Lee Y.-H."/>
            <person name="Li L."/>
            <person name="Manners J.M."/>
            <person name="Miranda-Saavedra D."/>
            <person name="Mukherjee M."/>
            <person name="Park G."/>
            <person name="Park J."/>
            <person name="Park S.-Y."/>
            <person name="Proctor R.H."/>
            <person name="Regev A."/>
            <person name="Ruiz-Roldan M.C."/>
            <person name="Sain D."/>
            <person name="Sakthikumar S."/>
            <person name="Sykes S."/>
            <person name="Schwartz D.C."/>
            <person name="Turgeon B.G."/>
            <person name="Wapinski I."/>
            <person name="Yoder O."/>
            <person name="Young S."/>
            <person name="Zeng Q."/>
            <person name="Zhou S."/>
            <person name="Galagan J."/>
            <person name="Cuomo C.A."/>
            <person name="Kistler H.C."/>
            <person name="Rep M."/>
        </authorList>
    </citation>
    <scope>GENOME REANNOTATION</scope>
    <source>
        <strain>ATCC MYA-4620 / CBS 123657 / FGSC 9075 / NRRL 31084 / PH-1</strain>
    </source>
</reference>
<reference key="3">
    <citation type="journal article" date="2015" name="BMC Genomics">
        <title>The completed genome sequence of the pathogenic ascomycete fungus Fusarium graminearum.</title>
        <authorList>
            <person name="King R."/>
            <person name="Urban M."/>
            <person name="Hammond-Kosack M.C.U."/>
            <person name="Hassani-Pak K."/>
            <person name="Hammond-Kosack K.E."/>
        </authorList>
    </citation>
    <scope>NUCLEOTIDE SEQUENCE [LARGE SCALE GENOMIC DNA]</scope>
    <source>
        <strain>ATCC MYA-4620 / CBS 123657 / FGSC 9075 / NRRL 31084 / PH-1</strain>
    </source>
</reference>
<reference key="4">
    <citation type="journal article" date="2017" name="Sci. Rep.">
        <title>Genome-wide functional analysis reveals that autophagy is necessary for growth, sporulation, deoxynivalenol production and virulence in Fusarium graminearum.</title>
        <authorList>
            <person name="Lv W."/>
            <person name="Wang C."/>
            <person name="Yang N."/>
            <person name="Que Y."/>
            <person name="Talbot N.J."/>
            <person name="Wang Z."/>
        </authorList>
    </citation>
    <scope>IDENTIFICATION</scope>
    <scope>DISRUPTION PHENOTYPE</scope>
</reference>
<accession>I1S8Q3</accession>
<proteinExistence type="inferred from homology"/>
<name>ATG26_GIBZE</name>